<comment type="catalytic activity">
    <reaction evidence="5">
        <text>(S)-malate + NAD(+) = oxaloacetate + NADH + H(+)</text>
        <dbReference type="Rhea" id="RHEA:21432"/>
        <dbReference type="ChEBI" id="CHEBI:15378"/>
        <dbReference type="ChEBI" id="CHEBI:15589"/>
        <dbReference type="ChEBI" id="CHEBI:16452"/>
        <dbReference type="ChEBI" id="CHEBI:57540"/>
        <dbReference type="ChEBI" id="CHEBI:57945"/>
        <dbReference type="EC" id="1.1.1.37"/>
    </reaction>
</comment>
<comment type="activity regulation">
    <text evidence="4">Enzyme activity is enhanced by acetylation.</text>
</comment>
<comment type="subunit">
    <text evidence="1">Homodimer.</text>
</comment>
<comment type="subcellular location">
    <subcellularLocation>
        <location evidence="2">Mitochondrion matrix</location>
    </subcellularLocation>
</comment>
<comment type="PTM">
    <text evidence="4">Acetylation is enhanced after treatment either with trichostin A (TCA) or with nicotinamide (NAM) with the appearance of tri- and tetraacetylations. Glucose also increases acetylation.</text>
</comment>
<comment type="similarity">
    <text evidence="7">Belongs to the LDH/MDH superfamily. MDH type 1 family.</text>
</comment>
<name>MDHM_BOVIN</name>
<gene>
    <name type="primary">MDH2</name>
</gene>
<keyword id="KW-0007">Acetylation</keyword>
<keyword id="KW-0325">Glycoprotein</keyword>
<keyword id="KW-0496">Mitochondrion</keyword>
<keyword id="KW-0520">NAD</keyword>
<keyword id="KW-0560">Oxidoreductase</keyword>
<keyword id="KW-0597">Phosphoprotein</keyword>
<keyword id="KW-1185">Reference proteome</keyword>
<keyword id="KW-0809">Transit peptide</keyword>
<keyword id="KW-0816">Tricarboxylic acid cycle</keyword>
<proteinExistence type="evidence at protein level"/>
<dbReference type="EC" id="1.1.1.37"/>
<dbReference type="EMBL" id="BC109597">
    <property type="protein sequence ID" value="AAI09598.1"/>
    <property type="molecule type" value="mRNA"/>
</dbReference>
<dbReference type="RefSeq" id="NP_001013605.2">
    <property type="nucleotide sequence ID" value="NM_001013587.2"/>
</dbReference>
<dbReference type="RefSeq" id="XP_005225065.1">
    <property type="nucleotide sequence ID" value="XM_005225008.2"/>
</dbReference>
<dbReference type="SMR" id="Q32LG3"/>
<dbReference type="FunCoup" id="Q32LG3">
    <property type="interactions" value="2512"/>
</dbReference>
<dbReference type="IntAct" id="Q32LG3">
    <property type="interactions" value="1"/>
</dbReference>
<dbReference type="STRING" id="9913.ENSBTAP00000012454"/>
<dbReference type="GlyCosmos" id="Q32LG3">
    <property type="glycosylation" value="1 site, No reported glycans"/>
</dbReference>
<dbReference type="GlyGen" id="Q32LG3">
    <property type="glycosylation" value="2 sites, 1 O-linked glycan (1 site)"/>
</dbReference>
<dbReference type="iPTMnet" id="Q32LG3"/>
<dbReference type="PaxDb" id="9913-ENSBTAP00000012454"/>
<dbReference type="PeptideAtlas" id="Q32LG3"/>
<dbReference type="GeneID" id="281306"/>
<dbReference type="VEuPathDB" id="HostDB:ENSBTAG00000009462"/>
<dbReference type="eggNOG" id="KOG1494">
    <property type="taxonomic scope" value="Eukaryota"/>
</dbReference>
<dbReference type="InParanoid" id="Q32LG3"/>
<dbReference type="OMA" id="ASCAEYI"/>
<dbReference type="OrthoDB" id="755699at2759"/>
<dbReference type="Reactome" id="R-BTA-71403">
    <property type="pathway name" value="Citric acid cycle (TCA cycle)"/>
</dbReference>
<dbReference type="Reactome" id="R-BTA-9837999">
    <property type="pathway name" value="Mitochondrial protein degradation"/>
</dbReference>
<dbReference type="Reactome" id="R-BTA-9856872">
    <property type="pathway name" value="Malate-aspartate shuttle"/>
</dbReference>
<dbReference type="SABIO-RK" id="Q32LG3"/>
<dbReference type="Proteomes" id="UP000009136">
    <property type="component" value="Chromosome 25"/>
</dbReference>
<dbReference type="Bgee" id="ENSBTAG00000009462">
    <property type="expression patterns" value="Expressed in cardiac ventricle and 104 other cell types or tissues"/>
</dbReference>
<dbReference type="GO" id="GO:0005737">
    <property type="term" value="C:cytoplasm"/>
    <property type="evidence" value="ECO:0000318"/>
    <property type="project" value="GO_Central"/>
</dbReference>
<dbReference type="GO" id="GO:0016020">
    <property type="term" value="C:membrane"/>
    <property type="evidence" value="ECO:0007669"/>
    <property type="project" value="Ensembl"/>
</dbReference>
<dbReference type="GO" id="GO:0005759">
    <property type="term" value="C:mitochondrial matrix"/>
    <property type="evidence" value="ECO:0000250"/>
    <property type="project" value="UniProtKB"/>
</dbReference>
<dbReference type="GO" id="GO:0005739">
    <property type="term" value="C:mitochondrion"/>
    <property type="evidence" value="ECO:0000318"/>
    <property type="project" value="GO_Central"/>
</dbReference>
<dbReference type="GO" id="GO:0030060">
    <property type="term" value="F:L-malate dehydrogenase (NAD+) activity"/>
    <property type="evidence" value="ECO:0000250"/>
    <property type="project" value="UniProtKB"/>
</dbReference>
<dbReference type="GO" id="GO:0042803">
    <property type="term" value="F:protein homodimerization activity"/>
    <property type="evidence" value="ECO:0000250"/>
    <property type="project" value="UniProtKB"/>
</dbReference>
<dbReference type="GO" id="GO:0009060">
    <property type="term" value="P:aerobic respiration"/>
    <property type="evidence" value="ECO:0000250"/>
    <property type="project" value="UniProtKB"/>
</dbReference>
<dbReference type="GO" id="GO:0006094">
    <property type="term" value="P:gluconeogenesis"/>
    <property type="evidence" value="ECO:0007669"/>
    <property type="project" value="Ensembl"/>
</dbReference>
<dbReference type="GO" id="GO:0006108">
    <property type="term" value="P:malate metabolic process"/>
    <property type="evidence" value="ECO:0007669"/>
    <property type="project" value="Ensembl"/>
</dbReference>
<dbReference type="GO" id="GO:0043490">
    <property type="term" value="P:malate-aspartate shuttle"/>
    <property type="evidence" value="ECO:0007669"/>
    <property type="project" value="Ensembl"/>
</dbReference>
<dbReference type="GO" id="GO:0006099">
    <property type="term" value="P:tricarboxylic acid cycle"/>
    <property type="evidence" value="ECO:0000318"/>
    <property type="project" value="GO_Central"/>
</dbReference>
<dbReference type="CDD" id="cd01337">
    <property type="entry name" value="MDH_glyoxysomal_mitochondrial"/>
    <property type="match status" value="1"/>
</dbReference>
<dbReference type="FunFam" id="3.40.50.720:FF:000013">
    <property type="entry name" value="Malate dehydrogenase"/>
    <property type="match status" value="1"/>
</dbReference>
<dbReference type="FunFam" id="3.90.110.10:FF:000001">
    <property type="entry name" value="Malate dehydrogenase"/>
    <property type="match status" value="1"/>
</dbReference>
<dbReference type="Gene3D" id="3.90.110.10">
    <property type="entry name" value="Lactate dehydrogenase/glycoside hydrolase, family 4, C-terminal"/>
    <property type="match status" value="1"/>
</dbReference>
<dbReference type="Gene3D" id="3.40.50.720">
    <property type="entry name" value="NAD(P)-binding Rossmann-like Domain"/>
    <property type="match status" value="1"/>
</dbReference>
<dbReference type="InterPro" id="IPR001557">
    <property type="entry name" value="L-lactate/malate_DH"/>
</dbReference>
<dbReference type="InterPro" id="IPR022383">
    <property type="entry name" value="Lactate/malate_DH_C"/>
</dbReference>
<dbReference type="InterPro" id="IPR001236">
    <property type="entry name" value="Lactate/malate_DH_N"/>
</dbReference>
<dbReference type="InterPro" id="IPR015955">
    <property type="entry name" value="Lactate_DH/Glyco_Ohase_4_C"/>
</dbReference>
<dbReference type="InterPro" id="IPR001252">
    <property type="entry name" value="Malate_DH_AS"/>
</dbReference>
<dbReference type="InterPro" id="IPR010097">
    <property type="entry name" value="Malate_DH_type1"/>
</dbReference>
<dbReference type="InterPro" id="IPR036291">
    <property type="entry name" value="NAD(P)-bd_dom_sf"/>
</dbReference>
<dbReference type="NCBIfam" id="TIGR01772">
    <property type="entry name" value="MDH_euk_gproteo"/>
    <property type="match status" value="1"/>
</dbReference>
<dbReference type="PANTHER" id="PTHR11540">
    <property type="entry name" value="MALATE AND LACTATE DEHYDROGENASE"/>
    <property type="match status" value="1"/>
</dbReference>
<dbReference type="PANTHER" id="PTHR11540:SF16">
    <property type="entry name" value="MALATE DEHYDROGENASE, MITOCHONDRIAL"/>
    <property type="match status" value="1"/>
</dbReference>
<dbReference type="Pfam" id="PF02866">
    <property type="entry name" value="Ldh_1_C"/>
    <property type="match status" value="1"/>
</dbReference>
<dbReference type="Pfam" id="PF00056">
    <property type="entry name" value="Ldh_1_N"/>
    <property type="match status" value="1"/>
</dbReference>
<dbReference type="PIRSF" id="PIRSF000102">
    <property type="entry name" value="Lac_mal_DH"/>
    <property type="match status" value="1"/>
</dbReference>
<dbReference type="SUPFAM" id="SSF56327">
    <property type="entry name" value="LDH C-terminal domain-like"/>
    <property type="match status" value="1"/>
</dbReference>
<dbReference type="SUPFAM" id="SSF51735">
    <property type="entry name" value="NAD(P)-binding Rossmann-fold domains"/>
    <property type="match status" value="1"/>
</dbReference>
<dbReference type="PROSITE" id="PS00068">
    <property type="entry name" value="MDH"/>
    <property type="match status" value="1"/>
</dbReference>
<reference key="1">
    <citation type="submission" date="2005-11" db="EMBL/GenBank/DDBJ databases">
        <authorList>
            <consortium name="NIH - Mammalian Gene Collection (MGC) project"/>
        </authorList>
    </citation>
    <scope>NUCLEOTIDE SEQUENCE [LARGE SCALE MRNA]</scope>
    <source>
        <strain>Crossbred X Angus</strain>
        <tissue>Liver</tissue>
    </source>
</reference>
<reference key="2">
    <citation type="journal article" date="2011" name="Science">
        <title>Sirt5 is a NAD-dependent protein lysine demalonylase and desuccinylase.</title>
        <authorList>
            <person name="Du J."/>
            <person name="Zhou Y."/>
            <person name="Su X."/>
            <person name="Yu J.J."/>
            <person name="Khan S."/>
            <person name="Jiang H."/>
            <person name="Kim J."/>
            <person name="Woo J."/>
            <person name="Kim J.H."/>
            <person name="Choi B.H."/>
            <person name="He B."/>
            <person name="Chen W."/>
            <person name="Zhang S."/>
            <person name="Cerione R.A."/>
            <person name="Auwerx J."/>
            <person name="Hao Q."/>
            <person name="Lin H."/>
        </authorList>
    </citation>
    <scope>ACETYLATION AT LYS-185; LYS-307; LYS-314 AND LYS-328</scope>
    <scope>MALONYLATION AT LYS-239 AND LYS-329</scope>
    <scope>SUCCINYLATION AT LYS-239; LYS-301 AND LYS-328</scope>
</reference>
<sequence>MLSALARPAGAALRRSFSTSAQNNAKVAVLGASGGIGQPLSLLLKNSPLVSRLTLYDIAHTPGVAADLSHIETRATVKGYLGPEQLPDCLKGCDVVVIPAGVPRKPGMTRDDLFNTNATIVATLTAACAQHCPEAMICIISNPVNSTIPITAEVFKKHGVYNPNKIFGVTTLDIVRANAFVAELKDLDPARVNVPVIGGHAGKTIIPLISQCTPKVEFPQDQLTTLTGRIQEAGTEVVKAKAGAGSATLSMAYAGARFVFSLVDAMNGKEGVVECSFVKSQETDCPYFSTPLLLGKKGIEKNLGIGKVSPFEEKMIAEAIPELKASIKKGEEFVKNMK</sequence>
<feature type="transit peptide" description="Mitochondrion" evidence="1">
    <location>
        <begin position="1"/>
        <end position="24"/>
    </location>
</feature>
<feature type="chain" id="PRO_0000260267" description="Malate dehydrogenase, mitochondrial">
    <location>
        <begin position="25"/>
        <end position="338"/>
    </location>
</feature>
<feature type="active site" description="Proton acceptor" evidence="1">
    <location>
        <position position="200"/>
    </location>
</feature>
<feature type="binding site" evidence="4">
    <location>
        <begin position="31"/>
        <end position="37"/>
    </location>
    <ligand>
        <name>NAD(+)</name>
        <dbReference type="ChEBI" id="CHEBI:57540"/>
    </ligand>
</feature>
<feature type="binding site" evidence="4">
    <location>
        <position position="57"/>
    </location>
    <ligand>
        <name>NAD(+)</name>
        <dbReference type="ChEBI" id="CHEBI:57540"/>
    </ligand>
</feature>
<feature type="binding site" evidence="5">
    <location>
        <position position="104"/>
    </location>
    <ligand>
        <name>substrate</name>
    </ligand>
</feature>
<feature type="binding site" evidence="5">
    <location>
        <position position="110"/>
    </location>
    <ligand>
        <name>substrate</name>
    </ligand>
</feature>
<feature type="binding site" evidence="4">
    <location>
        <position position="117"/>
    </location>
    <ligand>
        <name>NAD(+)</name>
        <dbReference type="ChEBI" id="CHEBI:57540"/>
    </ligand>
</feature>
<feature type="binding site" evidence="4">
    <location>
        <begin position="140"/>
        <end position="142"/>
    </location>
    <ligand>
        <name>NAD(+)</name>
        <dbReference type="ChEBI" id="CHEBI:57540"/>
    </ligand>
</feature>
<feature type="binding site" evidence="5">
    <location>
        <position position="142"/>
    </location>
    <ligand>
        <name>substrate</name>
    </ligand>
</feature>
<feature type="binding site" evidence="5">
    <location>
        <position position="176"/>
    </location>
    <ligand>
        <name>substrate</name>
    </ligand>
</feature>
<feature type="binding site" evidence="4">
    <location>
        <position position="251"/>
    </location>
    <ligand>
        <name>NAD(+)</name>
        <dbReference type="ChEBI" id="CHEBI:57540"/>
    </ligand>
</feature>
<feature type="modified residue" description="N6-acetyllysine; alternate" evidence="3">
    <location>
        <position position="78"/>
    </location>
</feature>
<feature type="modified residue" description="N6-succinyllysine; alternate" evidence="3">
    <location>
        <position position="78"/>
    </location>
</feature>
<feature type="modified residue" description="N6-acetyllysine; alternate" evidence="3">
    <location>
        <position position="91"/>
    </location>
</feature>
<feature type="modified residue" description="N6-succinyllysine; alternate" evidence="3">
    <location>
        <position position="91"/>
    </location>
</feature>
<feature type="modified residue" description="N6-acetyllysine" evidence="4">
    <location>
        <position position="165"/>
    </location>
</feature>
<feature type="modified residue" description="N6-acetyllysine; alternate" evidence="6">
    <location>
        <position position="185"/>
    </location>
</feature>
<feature type="modified residue" description="N6-succinyllysine; alternate" evidence="3">
    <location>
        <position position="185"/>
    </location>
</feature>
<feature type="modified residue" description="N6-succinyllysine" evidence="3">
    <location>
        <position position="203"/>
    </location>
</feature>
<feature type="modified residue" description="N6-acetyllysine; alternate" evidence="3">
    <location>
        <position position="215"/>
    </location>
</feature>
<feature type="modified residue" description="N6-succinyllysine; alternate" evidence="3">
    <location>
        <position position="215"/>
    </location>
</feature>
<feature type="modified residue" description="N6-acetyllysine; alternate" evidence="3">
    <location>
        <position position="239"/>
    </location>
</feature>
<feature type="modified residue" description="N6-malonyllysine; alternate" evidence="6">
    <location>
        <position position="239"/>
    </location>
</feature>
<feature type="modified residue" description="N6-succinyllysine; alternate" evidence="6">
    <location>
        <position position="239"/>
    </location>
</feature>
<feature type="modified residue" description="Phosphoserine" evidence="4">
    <location>
        <position position="246"/>
    </location>
</feature>
<feature type="modified residue" description="N6-succinyllysine" evidence="3">
    <location>
        <position position="269"/>
    </location>
</feature>
<feature type="modified residue" description="N6-acetyllysine; alternate" evidence="3">
    <location>
        <position position="296"/>
    </location>
</feature>
<feature type="modified residue" description="N6-succinyllysine; alternate" evidence="3">
    <location>
        <position position="296"/>
    </location>
</feature>
<feature type="modified residue" description="N6-acetyllysine; alternate" evidence="4">
    <location>
        <position position="301"/>
    </location>
</feature>
<feature type="modified residue" description="N6-succinyllysine; alternate" evidence="6">
    <location>
        <position position="301"/>
    </location>
</feature>
<feature type="modified residue" description="N6-acetyllysine; alternate" evidence="6">
    <location>
        <position position="307"/>
    </location>
</feature>
<feature type="modified residue" description="N6-malonyllysine; alternate" evidence="4">
    <location>
        <position position="307"/>
    </location>
</feature>
<feature type="modified residue" description="N6-succinyllysine; alternate" evidence="3">
    <location>
        <position position="307"/>
    </location>
</feature>
<feature type="modified residue" description="N6-acetyllysine; alternate" evidence="6">
    <location>
        <position position="314"/>
    </location>
</feature>
<feature type="modified residue" description="N6-succinyllysine; alternate" evidence="3">
    <location>
        <position position="314"/>
    </location>
</feature>
<feature type="modified residue" description="N6-acetyllysine; alternate" evidence="3">
    <location>
        <position position="324"/>
    </location>
</feature>
<feature type="modified residue" description="N6-succinyllysine; alternate" evidence="3">
    <location>
        <position position="324"/>
    </location>
</feature>
<feature type="modified residue" description="Phosphoserine" evidence="4">
    <location>
        <position position="326"/>
    </location>
</feature>
<feature type="modified residue" description="N6-acetyllysine; alternate" evidence="6">
    <location>
        <position position="328"/>
    </location>
</feature>
<feature type="modified residue" description="N6-succinyllysine; alternate" evidence="6">
    <location>
        <position position="328"/>
    </location>
</feature>
<feature type="modified residue" description="N6-acetyllysine; alternate" evidence="4">
    <location>
        <position position="329"/>
    </location>
</feature>
<feature type="modified residue" description="N6-malonyllysine; alternate" evidence="6">
    <location>
        <position position="329"/>
    </location>
</feature>
<feature type="modified residue" description="N6-acetyllysine; alternate" evidence="4">
    <location>
        <position position="335"/>
    </location>
</feature>
<feature type="modified residue" description="N6-succinyllysine; alternate" evidence="3">
    <location>
        <position position="335"/>
    </location>
</feature>
<feature type="glycosylation site" description="O-linked (GlcNAc) serine" evidence="2">
    <location>
        <position position="33"/>
    </location>
</feature>
<protein>
    <recommendedName>
        <fullName>Malate dehydrogenase, mitochondrial</fullName>
        <ecNumber>1.1.1.37</ecNumber>
    </recommendedName>
</protein>
<accession>Q32LG3</accession>
<organism>
    <name type="scientific">Bos taurus</name>
    <name type="common">Bovine</name>
    <dbReference type="NCBI Taxonomy" id="9913"/>
    <lineage>
        <taxon>Eukaryota</taxon>
        <taxon>Metazoa</taxon>
        <taxon>Chordata</taxon>
        <taxon>Craniata</taxon>
        <taxon>Vertebrata</taxon>
        <taxon>Euteleostomi</taxon>
        <taxon>Mammalia</taxon>
        <taxon>Eutheria</taxon>
        <taxon>Laurasiatheria</taxon>
        <taxon>Artiodactyla</taxon>
        <taxon>Ruminantia</taxon>
        <taxon>Pecora</taxon>
        <taxon>Bovidae</taxon>
        <taxon>Bovinae</taxon>
        <taxon>Bos</taxon>
    </lineage>
</organism>
<evidence type="ECO:0000250" key="1">
    <source>
        <dbReference type="UniProtKB" id="P00346"/>
    </source>
</evidence>
<evidence type="ECO:0000250" key="2">
    <source>
        <dbReference type="UniProtKB" id="P04636"/>
    </source>
</evidence>
<evidence type="ECO:0000250" key="3">
    <source>
        <dbReference type="UniProtKB" id="P08249"/>
    </source>
</evidence>
<evidence type="ECO:0000250" key="4">
    <source>
        <dbReference type="UniProtKB" id="P40926"/>
    </source>
</evidence>
<evidence type="ECO:0000255" key="5">
    <source>
        <dbReference type="PROSITE-ProRule" id="PRU10004"/>
    </source>
</evidence>
<evidence type="ECO:0000269" key="6">
    <source>
    </source>
</evidence>
<evidence type="ECO:0000305" key="7"/>